<gene>
    <name evidence="1" type="primary">rpl7ae</name>
    <name type="ordered locus">TV0447</name>
    <name type="ORF">TVG0437556</name>
</gene>
<reference key="1">
    <citation type="journal article" date="2000" name="Proc. Natl. Acad. Sci. U.S.A.">
        <title>Archaeal adaptation to higher temperatures revealed by genomic sequence of Thermoplasma volcanium.</title>
        <authorList>
            <person name="Kawashima T."/>
            <person name="Amano N."/>
            <person name="Koike H."/>
            <person name="Makino S."/>
            <person name="Higuchi S."/>
            <person name="Kawashima-Ohya Y."/>
            <person name="Watanabe K."/>
            <person name="Yamazaki M."/>
            <person name="Kanehori K."/>
            <person name="Kawamoto T."/>
            <person name="Nunoshiba T."/>
            <person name="Yamamoto Y."/>
            <person name="Aramaki H."/>
            <person name="Makino K."/>
            <person name="Suzuki M."/>
        </authorList>
    </citation>
    <scope>NUCLEOTIDE SEQUENCE [LARGE SCALE GENOMIC DNA]</scope>
    <source>
        <strain>ATCC 51530 / DSM 4299 / JCM 9571 / NBRC 15438 / GSS1</strain>
    </source>
</reference>
<proteinExistence type="inferred from homology"/>
<evidence type="ECO:0000255" key="1">
    <source>
        <dbReference type="HAMAP-Rule" id="MF_00326"/>
    </source>
</evidence>
<evidence type="ECO:0000305" key="2"/>
<sequence>MEKSYVKFETPEDVSQKALDLVESAFRSGKIKKGTNEVIKSIERGESKLVVIAEDVNPPEVVYYLPSLCEDKKVPYVYVKKKADLGSKVGIASAASVSIVDYGKNEELYKSIVSAVEQLKK</sequence>
<protein>
    <recommendedName>
        <fullName evidence="1">Large ribosomal subunit protein eL8</fullName>
    </recommendedName>
    <alternativeName>
        <fullName evidence="2">50S ribosomal protein L7Ae</fullName>
    </alternativeName>
    <alternativeName>
        <fullName evidence="1">Ribosomal protein L8e</fullName>
    </alternativeName>
</protein>
<name>RL7A_THEVO</name>
<keyword id="KW-0963">Cytoplasm</keyword>
<keyword id="KW-0687">Ribonucleoprotein</keyword>
<keyword id="KW-0689">Ribosomal protein</keyword>
<keyword id="KW-0694">RNA-binding</keyword>
<keyword id="KW-0699">rRNA-binding</keyword>
<keyword id="KW-0819">tRNA processing</keyword>
<dbReference type="EMBL" id="BA000011">
    <property type="protein sequence ID" value="BAB59589.1"/>
    <property type="molecule type" value="Genomic_DNA"/>
</dbReference>
<dbReference type="RefSeq" id="WP_010916707.1">
    <property type="nucleotide sequence ID" value="NC_002689.2"/>
</dbReference>
<dbReference type="SMR" id="Q97BK8"/>
<dbReference type="STRING" id="273116.gene:9381228"/>
<dbReference type="PaxDb" id="273116-14324662"/>
<dbReference type="GeneID" id="1440965"/>
<dbReference type="KEGG" id="tvo:TVG0437556"/>
<dbReference type="eggNOG" id="arCOG01751">
    <property type="taxonomic scope" value="Archaea"/>
</dbReference>
<dbReference type="HOGENOM" id="CLU_084513_4_0_2"/>
<dbReference type="OrthoDB" id="25810at2157"/>
<dbReference type="PhylomeDB" id="Q97BK8"/>
<dbReference type="Proteomes" id="UP000001017">
    <property type="component" value="Chromosome"/>
</dbReference>
<dbReference type="GO" id="GO:0005737">
    <property type="term" value="C:cytoplasm"/>
    <property type="evidence" value="ECO:0007669"/>
    <property type="project" value="UniProtKB-SubCell"/>
</dbReference>
<dbReference type="GO" id="GO:1990904">
    <property type="term" value="C:ribonucleoprotein complex"/>
    <property type="evidence" value="ECO:0007669"/>
    <property type="project" value="UniProtKB-KW"/>
</dbReference>
<dbReference type="GO" id="GO:0005840">
    <property type="term" value="C:ribosome"/>
    <property type="evidence" value="ECO:0007669"/>
    <property type="project" value="UniProtKB-KW"/>
</dbReference>
<dbReference type="GO" id="GO:0004526">
    <property type="term" value="F:ribonuclease P activity"/>
    <property type="evidence" value="ECO:0007669"/>
    <property type="project" value="UniProtKB-UniRule"/>
</dbReference>
<dbReference type="GO" id="GO:0019843">
    <property type="term" value="F:rRNA binding"/>
    <property type="evidence" value="ECO:0007669"/>
    <property type="project" value="UniProtKB-KW"/>
</dbReference>
<dbReference type="GO" id="GO:0003735">
    <property type="term" value="F:structural constituent of ribosome"/>
    <property type="evidence" value="ECO:0007669"/>
    <property type="project" value="InterPro"/>
</dbReference>
<dbReference type="GO" id="GO:0042254">
    <property type="term" value="P:ribosome biogenesis"/>
    <property type="evidence" value="ECO:0007669"/>
    <property type="project" value="InterPro"/>
</dbReference>
<dbReference type="GO" id="GO:0006412">
    <property type="term" value="P:translation"/>
    <property type="evidence" value="ECO:0007669"/>
    <property type="project" value="UniProtKB-UniRule"/>
</dbReference>
<dbReference type="GO" id="GO:0001682">
    <property type="term" value="P:tRNA 5'-leader removal"/>
    <property type="evidence" value="ECO:0007669"/>
    <property type="project" value="UniProtKB-UniRule"/>
</dbReference>
<dbReference type="FunFam" id="3.30.1330.30:FF:000020">
    <property type="entry name" value="50S ribosomal protein L7Ae"/>
    <property type="match status" value="1"/>
</dbReference>
<dbReference type="Gene3D" id="3.30.1330.30">
    <property type="match status" value="1"/>
</dbReference>
<dbReference type="HAMAP" id="MF_00326">
    <property type="entry name" value="Ribosomal_eL8"/>
    <property type="match status" value="1"/>
</dbReference>
<dbReference type="InterPro" id="IPR050257">
    <property type="entry name" value="eL8/uL1-like"/>
</dbReference>
<dbReference type="InterPro" id="IPR029064">
    <property type="entry name" value="Ribosomal_eL30-like_sf"/>
</dbReference>
<dbReference type="InterPro" id="IPR004037">
    <property type="entry name" value="Ribosomal_eL8-like_CS"/>
</dbReference>
<dbReference type="InterPro" id="IPR004038">
    <property type="entry name" value="Ribosomal_eL8/eL30/eS12/Gad45"/>
</dbReference>
<dbReference type="InterPro" id="IPR018492">
    <property type="entry name" value="Ribosomal_eL8/Nhp2"/>
</dbReference>
<dbReference type="InterPro" id="IPR022481">
    <property type="entry name" value="Ribosomal_eL8_arc"/>
</dbReference>
<dbReference type="NCBIfam" id="TIGR03677">
    <property type="entry name" value="eL8_ribo"/>
    <property type="match status" value="1"/>
</dbReference>
<dbReference type="PANTHER" id="PTHR23105">
    <property type="entry name" value="RIBOSOMAL PROTEIN L7AE FAMILY MEMBER"/>
    <property type="match status" value="1"/>
</dbReference>
<dbReference type="Pfam" id="PF01248">
    <property type="entry name" value="Ribosomal_L7Ae"/>
    <property type="match status" value="1"/>
</dbReference>
<dbReference type="PRINTS" id="PR00881">
    <property type="entry name" value="L7ARS6FAMILY"/>
</dbReference>
<dbReference type="PRINTS" id="PR00884">
    <property type="entry name" value="RIBOSOMALHS6"/>
</dbReference>
<dbReference type="SUPFAM" id="SSF55315">
    <property type="entry name" value="L30e-like"/>
    <property type="match status" value="1"/>
</dbReference>
<dbReference type="PROSITE" id="PS01082">
    <property type="entry name" value="RIBOSOMAL_L7AE"/>
    <property type="match status" value="1"/>
</dbReference>
<accession>Q97BK8</accession>
<organism>
    <name type="scientific">Thermoplasma volcanium (strain ATCC 51530 / DSM 4299 / JCM 9571 / NBRC 15438 / GSS1)</name>
    <dbReference type="NCBI Taxonomy" id="273116"/>
    <lineage>
        <taxon>Archaea</taxon>
        <taxon>Methanobacteriati</taxon>
        <taxon>Thermoplasmatota</taxon>
        <taxon>Thermoplasmata</taxon>
        <taxon>Thermoplasmatales</taxon>
        <taxon>Thermoplasmataceae</taxon>
        <taxon>Thermoplasma</taxon>
    </lineage>
</organism>
<comment type="function">
    <text evidence="1">Multifunctional RNA-binding protein that recognizes the K-turn motif in ribosomal RNA, the RNA component of RNase P, box H/ACA, box C/D and box C'/D' sRNAs.</text>
</comment>
<comment type="subunit">
    <text evidence="1">Part of the 50S ribosomal subunit. Probably part of the RNase P complex.</text>
</comment>
<comment type="subcellular location">
    <subcellularLocation>
        <location evidence="1">Cytoplasm</location>
    </subcellularLocation>
</comment>
<comment type="similarity">
    <text evidence="1">Belongs to the eukaryotic ribosomal protein eL8 family.</text>
</comment>
<feature type="chain" id="PRO_0000136809" description="Large ribosomal subunit protein eL8">
    <location>
        <begin position="1"/>
        <end position="121"/>
    </location>
</feature>